<keyword id="KW-0175">Coiled coil</keyword>
<keyword id="KW-0903">Direct protein sequencing</keyword>
<keyword id="KW-0403">Intermediate filament</keyword>
<keyword id="KW-0964">Secreted</keyword>
<name>TBFA_EPTST</name>
<sequence length="643" mass="66694">MSISQTVSKSYTKSVSRGGQGVSYSQSSSHKVGGGSVRYGTTYSSGGISRVLGFQGGAGGAASAGFGGSVGGSGLSRVLGGSMVSGYRSGMGVGGLSLSGTAGLPVSLRGVGAGKALHAITSAFRTRVGGPGTSVGGYGVNYSFLPSTAGPSFGGPFGGPFGGPFGGPLGPGYIDPATLPSPDTVQHTRIREKQDLQTLNTKFANLVDQVRTLEQHNAILKAQISMITSPSDTPEGPVNTAVVASTVTATYNAQIEDLRTTNTALHSEIDHLTTIINDITTKYEEQVEVTRTLETDWNTNKDNIDNTYLTIVDLQTKVQGLDEQINTTKQIYNARVREVQAAVTGGPTAAYSIRVDNTHQAIDLTTSLQEMKTHYEVLATKSREEAFTQVQPRIQEMAVTVQAGPQAIIQAKEQIHVFKLQIDSVHREIDRLHRKNTDVEREITVIETNIHTQSDEWTNNINSLKVDLEVIKKQITQYARDYQDLLATKMSLDVEIAAYKKLLDSEETRISHGGGITITTNAGTFPGGLSAAPGGGASYAMVPAGVGGVGLAGVGGYGFRSMGGGGGVGYGAGGGGVGYGVGGGFGGGMGMSMSRMSMGAAVGGGSYGSGSGYSGGFGLSSSRAGYSASRKSYSSARSSSRIY</sequence>
<protein>
    <recommendedName>
        <fullName>Thread biopolymer filament subunit alpha</fullName>
    </recommendedName>
</protein>
<dbReference type="EMBL" id="U11865">
    <property type="protein sequence ID" value="AAC59661.1"/>
    <property type="molecule type" value="mRNA"/>
</dbReference>
<dbReference type="PIR" id="I50539">
    <property type="entry name" value="I50539"/>
</dbReference>
<dbReference type="SMR" id="Q90501"/>
<dbReference type="GO" id="GO:0005576">
    <property type="term" value="C:extracellular region"/>
    <property type="evidence" value="ECO:0007669"/>
    <property type="project" value="UniProtKB-SubCell"/>
</dbReference>
<dbReference type="GO" id="GO:0005882">
    <property type="term" value="C:intermediate filament"/>
    <property type="evidence" value="ECO:0007669"/>
    <property type="project" value="UniProtKB-KW"/>
</dbReference>
<dbReference type="Gene3D" id="1.20.5.170">
    <property type="match status" value="1"/>
</dbReference>
<dbReference type="Gene3D" id="1.20.5.500">
    <property type="entry name" value="Single helix bin"/>
    <property type="match status" value="1"/>
</dbReference>
<dbReference type="Gene3D" id="1.20.5.1160">
    <property type="entry name" value="Vasodilator-stimulated phosphoprotein"/>
    <property type="match status" value="1"/>
</dbReference>
<dbReference type="InterPro" id="IPR018039">
    <property type="entry name" value="IF_conserved"/>
</dbReference>
<dbReference type="InterPro" id="IPR039008">
    <property type="entry name" value="IF_rod_dom"/>
</dbReference>
<dbReference type="PANTHER" id="PTHR45616">
    <property type="entry name" value="GATA-TYPE DOMAIN-CONTAINING PROTEIN"/>
    <property type="match status" value="1"/>
</dbReference>
<dbReference type="PANTHER" id="PTHR45616:SF4">
    <property type="entry name" value="THREAD BIOPOLYMER FILAMENT SUBUNIT ALPHA"/>
    <property type="match status" value="1"/>
</dbReference>
<dbReference type="Pfam" id="PF00038">
    <property type="entry name" value="Filament"/>
    <property type="match status" value="1"/>
</dbReference>
<dbReference type="SMART" id="SM01391">
    <property type="entry name" value="Filament"/>
    <property type="match status" value="1"/>
</dbReference>
<dbReference type="SUPFAM" id="SSF64593">
    <property type="entry name" value="Intermediate filament protein, coiled coil region"/>
    <property type="match status" value="2"/>
</dbReference>
<dbReference type="PROSITE" id="PS00226">
    <property type="entry name" value="IF_ROD_1"/>
    <property type="match status" value="1"/>
</dbReference>
<dbReference type="PROSITE" id="PS51842">
    <property type="entry name" value="IF_ROD_2"/>
    <property type="match status" value="1"/>
</dbReference>
<reference key="1">
    <citation type="journal article" date="1994" name="J. Cell Sci.">
        <title>An unusual intermediate filament subunit from the cytoskeletal biopolymer released extracellularly into seawater by the primitive hagfish (Eptatretus stouti).</title>
        <authorList>
            <person name="Koch E.A."/>
            <person name="Spitzer R.H."/>
            <person name="Pithawalla R.B."/>
            <person name="Parry D.A.D."/>
        </authorList>
    </citation>
    <scope>NUCLEOTIDE SEQUENCE [MRNA]</scope>
    <scope>PARTIAL PROTEIN SEQUENCE</scope>
    <source>
        <tissue>Slime gland</tissue>
    </source>
</reference>
<feature type="chain" id="PRO_0000063863" description="Thread biopolymer filament subunit alpha">
    <location>
        <begin position="1"/>
        <end position="643"/>
    </location>
</feature>
<feature type="domain" description="IF rod" evidence="1">
    <location>
        <begin position="192"/>
        <end position="510"/>
    </location>
</feature>
<feature type="region of interest" description="Head">
    <location>
        <begin position="1"/>
        <end position="191"/>
    </location>
</feature>
<feature type="region of interest" description="Disordered" evidence="2">
    <location>
        <begin position="1"/>
        <end position="34"/>
    </location>
</feature>
<feature type="region of interest" description="Coil 1A">
    <location>
        <begin position="193"/>
        <end position="227"/>
    </location>
</feature>
<feature type="region of interest" description="Linker 1">
    <location>
        <begin position="228"/>
        <end position="240"/>
    </location>
</feature>
<feature type="region of interest" description="Coil 1B">
    <location>
        <begin position="241"/>
        <end position="341"/>
    </location>
</feature>
<feature type="region of interest" description="Linker 12">
    <location>
        <begin position="342"/>
        <end position="362"/>
    </location>
</feature>
<feature type="region of interest" description="Coil 2A">
    <location>
        <begin position="363"/>
        <end position="381"/>
    </location>
</feature>
<feature type="region of interest" description="Linker 2">
    <location>
        <begin position="382"/>
        <end position="389"/>
    </location>
</feature>
<feature type="region of interest" description="Coil 2B">
    <location>
        <begin position="390"/>
        <end position="510"/>
    </location>
</feature>
<feature type="region of interest" description="Tail">
    <location>
        <begin position="511"/>
        <end position="643"/>
    </location>
</feature>
<feature type="region of interest" description="Disordered" evidence="2">
    <location>
        <begin position="622"/>
        <end position="643"/>
    </location>
</feature>
<feature type="compositionally biased region" description="Polar residues" evidence="2">
    <location>
        <begin position="1"/>
        <end position="13"/>
    </location>
</feature>
<feature type="compositionally biased region" description="Low complexity" evidence="2">
    <location>
        <begin position="14"/>
        <end position="31"/>
    </location>
</feature>
<evidence type="ECO:0000255" key="1">
    <source>
        <dbReference type="PROSITE-ProRule" id="PRU01188"/>
    </source>
</evidence>
<evidence type="ECO:0000256" key="2">
    <source>
        <dbReference type="SAM" id="MobiDB-lite"/>
    </source>
</evidence>
<proteinExistence type="evidence at protein level"/>
<accession>Q90501</accession>
<comment type="function">
    <text>Released extracellularly into seawater and provides physical and biological defense against invasive organism by modulation of the viscoelastic properties of mucus.</text>
</comment>
<comment type="subunit">
    <text>Coiled-coil heterodimer of an alpha and a gamma subunit. Assemble into 10 nm filaments. Forms a massive, conical, intermediate filament biopolymer of approximately 60 cm.</text>
</comment>
<comment type="subcellular location">
    <subcellularLocation>
        <location>Secreted</location>
        <location>Extracellular space</location>
    </subcellularLocation>
</comment>
<comment type="similarity">
    <text evidence="1">Belongs to the intermediate filament family.</text>
</comment>
<organism>
    <name type="scientific">Eptatretus stoutii</name>
    <name type="common">Pacific hagfish</name>
    <dbReference type="NCBI Taxonomy" id="7765"/>
    <lineage>
        <taxon>Eukaryota</taxon>
        <taxon>Metazoa</taxon>
        <taxon>Chordata</taxon>
        <taxon>Craniata</taxon>
        <taxon>Vertebrata</taxon>
        <taxon>Cyclostomata</taxon>
        <taxon>Myxini</taxon>
        <taxon>Myxiniformes</taxon>
        <taxon>Myxinidae</taxon>
        <taxon>Eptatretinae</taxon>
        <taxon>Eptatretus</taxon>
    </lineage>
</organism>